<keyword id="KW-0025">Alternative splicing</keyword>
<keyword id="KW-0458">Lysosome</keyword>
<keyword id="KW-0472">Membrane</keyword>
<keyword id="KW-1267">Proteomics identification</keyword>
<keyword id="KW-1185">Reference proteome</keyword>
<keyword id="KW-0677">Repeat</keyword>
<keyword id="KW-0812">Transmembrane</keyword>
<keyword id="KW-1133">Transmembrane helix</keyword>
<proteinExistence type="evidence at protein level"/>
<evidence type="ECO:0000250" key="1">
    <source>
        <dbReference type="UniProtKB" id="P58749"/>
    </source>
</evidence>
<evidence type="ECO:0000255" key="2"/>
<evidence type="ECO:0000255" key="3">
    <source>
        <dbReference type="PROSITE-ProRule" id="PRU01087"/>
    </source>
</evidence>
<evidence type="ECO:0000303" key="4">
    <source>
    </source>
</evidence>
<evidence type="ECO:0000303" key="5">
    <source ref="2"/>
</evidence>
<evidence type="ECO:0000305" key="6"/>
<reference key="1">
    <citation type="journal article" date="2000" name="Cytogenet. Cell Genet.">
        <title>Cloning of the novel gene TM6SF1 reveals conservation of clusters of paralogous genes between human chromosomes 15q24-q26 and 19p13.3-p12.</title>
        <authorList>
            <person name="Carim-Todd L."/>
            <person name="Escarceller M."/>
            <person name="Estivill X."/>
            <person name="Sumoy L."/>
        </authorList>
    </citation>
    <scope>NUCLEOTIDE SEQUENCE [MRNA] (ISOFORM 1)</scope>
</reference>
<reference key="2">
    <citation type="submission" date="2005-04" db="EMBL/GenBank/DDBJ databases">
        <authorList>
            <person name="Lin L."/>
            <person name="Nong W."/>
            <person name="Zhou G."/>
            <person name="Li H."/>
            <person name="Ke R."/>
            <person name="Shen C."/>
            <person name="Zhong G."/>
            <person name="Zheng Z."/>
            <person name="Liang M."/>
            <person name="Li M."/>
            <person name="Yang S."/>
        </authorList>
    </citation>
    <scope>NUCLEOTIDE SEQUENCE [MRNA] (ISOFORM 2)</scope>
</reference>
<reference key="3">
    <citation type="journal article" date="2004" name="Nat. Genet.">
        <title>Complete sequencing and characterization of 21,243 full-length human cDNAs.</title>
        <authorList>
            <person name="Ota T."/>
            <person name="Suzuki Y."/>
            <person name="Nishikawa T."/>
            <person name="Otsuki T."/>
            <person name="Sugiyama T."/>
            <person name="Irie R."/>
            <person name="Wakamatsu A."/>
            <person name="Hayashi K."/>
            <person name="Sato H."/>
            <person name="Nagai K."/>
            <person name="Kimura K."/>
            <person name="Makita H."/>
            <person name="Sekine M."/>
            <person name="Obayashi M."/>
            <person name="Nishi T."/>
            <person name="Shibahara T."/>
            <person name="Tanaka T."/>
            <person name="Ishii S."/>
            <person name="Yamamoto J."/>
            <person name="Saito K."/>
            <person name="Kawai Y."/>
            <person name="Isono Y."/>
            <person name="Nakamura Y."/>
            <person name="Nagahari K."/>
            <person name="Murakami K."/>
            <person name="Yasuda T."/>
            <person name="Iwayanagi T."/>
            <person name="Wagatsuma M."/>
            <person name="Shiratori A."/>
            <person name="Sudo H."/>
            <person name="Hosoiri T."/>
            <person name="Kaku Y."/>
            <person name="Kodaira H."/>
            <person name="Kondo H."/>
            <person name="Sugawara M."/>
            <person name="Takahashi M."/>
            <person name="Kanda K."/>
            <person name="Yokoi T."/>
            <person name="Furuya T."/>
            <person name="Kikkawa E."/>
            <person name="Omura Y."/>
            <person name="Abe K."/>
            <person name="Kamihara K."/>
            <person name="Katsuta N."/>
            <person name="Sato K."/>
            <person name="Tanikawa M."/>
            <person name="Yamazaki M."/>
            <person name="Ninomiya K."/>
            <person name="Ishibashi T."/>
            <person name="Yamashita H."/>
            <person name="Murakawa K."/>
            <person name="Fujimori K."/>
            <person name="Tanai H."/>
            <person name="Kimata M."/>
            <person name="Watanabe M."/>
            <person name="Hiraoka S."/>
            <person name="Chiba Y."/>
            <person name="Ishida S."/>
            <person name="Ono Y."/>
            <person name="Takiguchi S."/>
            <person name="Watanabe S."/>
            <person name="Yosida M."/>
            <person name="Hotuta T."/>
            <person name="Kusano J."/>
            <person name="Kanehori K."/>
            <person name="Takahashi-Fujii A."/>
            <person name="Hara H."/>
            <person name="Tanase T.-O."/>
            <person name="Nomura Y."/>
            <person name="Togiya S."/>
            <person name="Komai F."/>
            <person name="Hara R."/>
            <person name="Takeuchi K."/>
            <person name="Arita M."/>
            <person name="Imose N."/>
            <person name="Musashino K."/>
            <person name="Yuuki H."/>
            <person name="Oshima A."/>
            <person name="Sasaki N."/>
            <person name="Aotsuka S."/>
            <person name="Yoshikawa Y."/>
            <person name="Matsunawa H."/>
            <person name="Ichihara T."/>
            <person name="Shiohata N."/>
            <person name="Sano S."/>
            <person name="Moriya S."/>
            <person name="Momiyama H."/>
            <person name="Satoh N."/>
            <person name="Takami S."/>
            <person name="Terashima Y."/>
            <person name="Suzuki O."/>
            <person name="Nakagawa S."/>
            <person name="Senoh A."/>
            <person name="Mizoguchi H."/>
            <person name="Goto Y."/>
            <person name="Shimizu F."/>
            <person name="Wakebe H."/>
            <person name="Hishigaki H."/>
            <person name="Watanabe T."/>
            <person name="Sugiyama A."/>
            <person name="Takemoto M."/>
            <person name="Kawakami B."/>
            <person name="Yamazaki M."/>
            <person name="Watanabe K."/>
            <person name="Kumagai A."/>
            <person name="Itakura S."/>
            <person name="Fukuzumi Y."/>
            <person name="Fujimori Y."/>
            <person name="Komiyama M."/>
            <person name="Tashiro H."/>
            <person name="Tanigami A."/>
            <person name="Fujiwara T."/>
            <person name="Ono T."/>
            <person name="Yamada K."/>
            <person name="Fujii Y."/>
            <person name="Ozaki K."/>
            <person name="Hirao M."/>
            <person name="Ohmori Y."/>
            <person name="Kawabata A."/>
            <person name="Hikiji T."/>
            <person name="Kobatake N."/>
            <person name="Inagaki H."/>
            <person name="Ikema Y."/>
            <person name="Okamoto S."/>
            <person name="Okitani R."/>
            <person name="Kawakami T."/>
            <person name="Noguchi S."/>
            <person name="Itoh T."/>
            <person name="Shigeta K."/>
            <person name="Senba T."/>
            <person name="Matsumura K."/>
            <person name="Nakajima Y."/>
            <person name="Mizuno T."/>
            <person name="Morinaga M."/>
            <person name="Sasaki M."/>
            <person name="Togashi T."/>
            <person name="Oyama M."/>
            <person name="Hata H."/>
            <person name="Watanabe M."/>
            <person name="Komatsu T."/>
            <person name="Mizushima-Sugano J."/>
            <person name="Satoh T."/>
            <person name="Shirai Y."/>
            <person name="Takahashi Y."/>
            <person name="Nakagawa K."/>
            <person name="Okumura K."/>
            <person name="Nagase T."/>
            <person name="Nomura N."/>
            <person name="Kikuchi H."/>
            <person name="Masuho Y."/>
            <person name="Yamashita R."/>
            <person name="Nakai K."/>
            <person name="Yada T."/>
            <person name="Nakamura Y."/>
            <person name="Ohara O."/>
            <person name="Isogai T."/>
            <person name="Sugano S."/>
        </authorList>
    </citation>
    <scope>NUCLEOTIDE SEQUENCE [LARGE SCALE MRNA] (ISOFORM 1)</scope>
    <source>
        <tissue>Synovium</tissue>
    </source>
</reference>
<reference key="4">
    <citation type="journal article" date="2006" name="Nature">
        <title>Analysis of the DNA sequence and duplication history of human chromosome 15.</title>
        <authorList>
            <person name="Zody M.C."/>
            <person name="Garber M."/>
            <person name="Sharpe T."/>
            <person name="Young S.K."/>
            <person name="Rowen L."/>
            <person name="O'Neill K."/>
            <person name="Whittaker C.A."/>
            <person name="Kamal M."/>
            <person name="Chang J.L."/>
            <person name="Cuomo C.A."/>
            <person name="Dewar K."/>
            <person name="FitzGerald M.G."/>
            <person name="Kodira C.D."/>
            <person name="Madan A."/>
            <person name="Qin S."/>
            <person name="Yang X."/>
            <person name="Abbasi N."/>
            <person name="Abouelleil A."/>
            <person name="Arachchi H.M."/>
            <person name="Baradarani L."/>
            <person name="Birditt B."/>
            <person name="Bloom S."/>
            <person name="Bloom T."/>
            <person name="Borowsky M.L."/>
            <person name="Burke J."/>
            <person name="Butler J."/>
            <person name="Cook A."/>
            <person name="DeArellano K."/>
            <person name="DeCaprio D."/>
            <person name="Dorris L. III"/>
            <person name="Dors M."/>
            <person name="Eichler E.E."/>
            <person name="Engels R."/>
            <person name="Fahey J."/>
            <person name="Fleetwood P."/>
            <person name="Friedman C."/>
            <person name="Gearin G."/>
            <person name="Hall J.L."/>
            <person name="Hensley G."/>
            <person name="Johnson E."/>
            <person name="Jones C."/>
            <person name="Kamat A."/>
            <person name="Kaur A."/>
            <person name="Locke D.P."/>
            <person name="Madan A."/>
            <person name="Munson G."/>
            <person name="Jaffe D.B."/>
            <person name="Lui A."/>
            <person name="Macdonald P."/>
            <person name="Mauceli E."/>
            <person name="Naylor J.W."/>
            <person name="Nesbitt R."/>
            <person name="Nicol R."/>
            <person name="O'Leary S.B."/>
            <person name="Ratcliffe A."/>
            <person name="Rounsley S."/>
            <person name="She X."/>
            <person name="Sneddon K.M.B."/>
            <person name="Stewart S."/>
            <person name="Sougnez C."/>
            <person name="Stone S.M."/>
            <person name="Topham K."/>
            <person name="Vincent D."/>
            <person name="Wang S."/>
            <person name="Zimmer A.R."/>
            <person name="Birren B.W."/>
            <person name="Hood L."/>
            <person name="Lander E.S."/>
            <person name="Nusbaum C."/>
        </authorList>
    </citation>
    <scope>NUCLEOTIDE SEQUENCE [LARGE SCALE GENOMIC DNA]</scope>
</reference>
<reference key="5">
    <citation type="submission" date="2005-07" db="EMBL/GenBank/DDBJ databases">
        <authorList>
            <person name="Mural R.J."/>
            <person name="Istrail S."/>
            <person name="Sutton G.G."/>
            <person name="Florea L."/>
            <person name="Halpern A.L."/>
            <person name="Mobarry C.M."/>
            <person name="Lippert R."/>
            <person name="Walenz B."/>
            <person name="Shatkay H."/>
            <person name="Dew I."/>
            <person name="Miller J.R."/>
            <person name="Flanigan M.J."/>
            <person name="Edwards N.J."/>
            <person name="Bolanos R."/>
            <person name="Fasulo D."/>
            <person name="Halldorsson B.V."/>
            <person name="Hannenhalli S."/>
            <person name="Turner R."/>
            <person name="Yooseph S."/>
            <person name="Lu F."/>
            <person name="Nusskern D.R."/>
            <person name="Shue B.C."/>
            <person name="Zheng X.H."/>
            <person name="Zhong F."/>
            <person name="Delcher A.L."/>
            <person name="Huson D.H."/>
            <person name="Kravitz S.A."/>
            <person name="Mouchard L."/>
            <person name="Reinert K."/>
            <person name="Remington K.A."/>
            <person name="Clark A.G."/>
            <person name="Waterman M.S."/>
            <person name="Eichler E.E."/>
            <person name="Adams M.D."/>
            <person name="Hunkapiller M.W."/>
            <person name="Myers E.W."/>
            <person name="Venter J.C."/>
        </authorList>
    </citation>
    <scope>NUCLEOTIDE SEQUENCE [LARGE SCALE GENOMIC DNA]</scope>
</reference>
<reference key="6">
    <citation type="journal article" date="2014" name="Front. Genet.">
        <title>TM6SF2 and MAC30, new enzyme homologs in sterol metabolism and common metabolic disease.</title>
        <authorList>
            <person name="Sanchez-Pulido L."/>
            <person name="Ponting C.P."/>
        </authorList>
    </citation>
    <scope>POSSIBLE FUNCTION AS STEROL ISOMERASE</scope>
    <scope>DOMAIN EXPERA</scope>
</reference>
<accession>Q9BZW5</accession>
<accession>A8K7T5</accession>
<accession>H3BU56</accession>
<accession>Q4U0U5</accession>
<sequence length="370" mass="41636">MSASAATGVFVLSLSAIPVTYVFNHLAAQHDSWTIVGVAALILFLVALLARVLVKRKPPRDPLFYVYAVFGFTSVVNLIIGLEQDGIIDGFMTHYLREGEPYLNTAYGHMICYWDGSAHYLMYLVMVAAIAWEETYRTIGLYWVGSIIMSVVVFVPGNIVGKYGTRICPAFFLSIPYTCLPVWAGFRIYNQPSENYNYPSKVIQEAQAKDLLRRPFDLMLVVCLLLATGFCLFRGLIALDCPSELCRLYTQFQEPYLKDPAAYPKIQMLAYMFYSVPYFVTALYGLVVPGCSWMPDITLIHAGGLAQAQFSHIGASLHARTAYVYRVPEEAKILFLALNIAYGVLPQLLAYRCIYKPEFFIKTKAEEKVE</sequence>
<protein>
    <recommendedName>
        <fullName>Transmembrane 6 superfamily member 1</fullName>
    </recommendedName>
</protein>
<dbReference type="EMBL" id="AF255922">
    <property type="protein sequence ID" value="AAG59699.1"/>
    <property type="molecule type" value="mRNA"/>
</dbReference>
<dbReference type="EMBL" id="DQ021909">
    <property type="protein sequence ID" value="AAY44754.1"/>
    <property type="molecule type" value="mRNA"/>
</dbReference>
<dbReference type="EMBL" id="AK292100">
    <property type="protein sequence ID" value="BAF84789.1"/>
    <property type="molecule type" value="mRNA"/>
</dbReference>
<dbReference type="EMBL" id="AC024270">
    <property type="status" value="NOT_ANNOTATED_CDS"/>
    <property type="molecule type" value="Genomic_DNA"/>
</dbReference>
<dbReference type="EMBL" id="CH471188">
    <property type="protein sequence ID" value="EAW62428.1"/>
    <property type="molecule type" value="Genomic_DNA"/>
</dbReference>
<dbReference type="CCDS" id="CCDS10323.1">
    <molecule id="Q9BZW5-1"/>
</dbReference>
<dbReference type="CCDS" id="CCDS45338.1">
    <molecule id="Q9BZW5-2"/>
</dbReference>
<dbReference type="RefSeq" id="NP_001138375.1">
    <molecule id="Q9BZW5-2"/>
    <property type="nucleotide sequence ID" value="NM_001144903.3"/>
</dbReference>
<dbReference type="RefSeq" id="NP_075379.2">
    <molecule id="Q9BZW5-1"/>
    <property type="nucleotide sequence ID" value="NM_023003.5"/>
</dbReference>
<dbReference type="BioGRID" id="119747">
    <property type="interactions" value="2"/>
</dbReference>
<dbReference type="FunCoup" id="Q9BZW5">
    <property type="interactions" value="34"/>
</dbReference>
<dbReference type="IntAct" id="Q9BZW5">
    <property type="interactions" value="4"/>
</dbReference>
<dbReference type="STRING" id="9606.ENSP00000317000"/>
<dbReference type="TCDB" id="8.A.93.2.4">
    <property type="family name" value="the sigma2 receptor or tmem97 (s2r) family"/>
</dbReference>
<dbReference type="iPTMnet" id="Q9BZW5"/>
<dbReference type="PhosphoSitePlus" id="Q9BZW5"/>
<dbReference type="BioMuta" id="TM6SF1"/>
<dbReference type="DMDM" id="209572686"/>
<dbReference type="MassIVE" id="Q9BZW5"/>
<dbReference type="PaxDb" id="9606-ENSP00000317000"/>
<dbReference type="PeptideAtlas" id="Q9BZW5"/>
<dbReference type="ProteomicsDB" id="42833"/>
<dbReference type="ProteomicsDB" id="79911">
    <molecule id="Q9BZW5-1"/>
</dbReference>
<dbReference type="Antibodypedia" id="15402">
    <property type="antibodies" value="78 antibodies from 15 providers"/>
</dbReference>
<dbReference type="DNASU" id="53346"/>
<dbReference type="Ensembl" id="ENST00000322019.14">
    <molecule id="Q9BZW5-1"/>
    <property type="protein sequence ID" value="ENSP00000317000.9"/>
    <property type="gene ID" value="ENSG00000136404.16"/>
</dbReference>
<dbReference type="Ensembl" id="ENST00000565774.5">
    <molecule id="Q9BZW5-2"/>
    <property type="protein sequence ID" value="ENSP00000457477.1"/>
    <property type="gene ID" value="ENSG00000136404.16"/>
</dbReference>
<dbReference type="GeneID" id="53346"/>
<dbReference type="KEGG" id="hsa:53346"/>
<dbReference type="MANE-Select" id="ENST00000322019.14">
    <property type="protein sequence ID" value="ENSP00000317000.9"/>
    <property type="RefSeq nucleotide sequence ID" value="NM_023003.5"/>
    <property type="RefSeq protein sequence ID" value="NP_075379.2"/>
</dbReference>
<dbReference type="UCSC" id="uc002bjp.4">
    <molecule id="Q9BZW5-1"/>
    <property type="organism name" value="human"/>
</dbReference>
<dbReference type="AGR" id="HGNC:11860"/>
<dbReference type="CTD" id="53346"/>
<dbReference type="DisGeNET" id="53346"/>
<dbReference type="GeneCards" id="TM6SF1"/>
<dbReference type="HGNC" id="HGNC:11860">
    <property type="gene designation" value="TM6SF1"/>
</dbReference>
<dbReference type="HPA" id="ENSG00000136404">
    <property type="expression patterns" value="Tissue enhanced (skeletal)"/>
</dbReference>
<dbReference type="MIM" id="606562">
    <property type="type" value="gene"/>
</dbReference>
<dbReference type="neXtProt" id="NX_Q9BZW5"/>
<dbReference type="OpenTargets" id="ENSG00000136404"/>
<dbReference type="PharmGKB" id="PA36561"/>
<dbReference type="VEuPathDB" id="HostDB:ENSG00000136404"/>
<dbReference type="eggNOG" id="ENOG502QRB2">
    <property type="taxonomic scope" value="Eukaryota"/>
</dbReference>
<dbReference type="GeneTree" id="ENSGT00390000012913"/>
<dbReference type="HOGENOM" id="CLU_046717_0_0_1"/>
<dbReference type="InParanoid" id="Q9BZW5"/>
<dbReference type="OMA" id="FFMKPKQ"/>
<dbReference type="OrthoDB" id="8181520at2759"/>
<dbReference type="PAN-GO" id="Q9BZW5">
    <property type="GO annotations" value="1 GO annotation based on evolutionary models"/>
</dbReference>
<dbReference type="PhylomeDB" id="Q9BZW5"/>
<dbReference type="TreeFam" id="TF333088"/>
<dbReference type="PathwayCommons" id="Q9BZW5"/>
<dbReference type="SignaLink" id="Q9BZW5"/>
<dbReference type="BioGRID-ORCS" id="53346">
    <property type="hits" value="6 hits in 1152 CRISPR screens"/>
</dbReference>
<dbReference type="ChiTaRS" id="TM6SF1">
    <property type="organism name" value="human"/>
</dbReference>
<dbReference type="GenomeRNAi" id="53346"/>
<dbReference type="Pharos" id="Q9BZW5">
    <property type="development level" value="Tdark"/>
</dbReference>
<dbReference type="PRO" id="PR:Q9BZW5"/>
<dbReference type="Proteomes" id="UP000005640">
    <property type="component" value="Chromosome 15"/>
</dbReference>
<dbReference type="RNAct" id="Q9BZW5">
    <property type="molecule type" value="protein"/>
</dbReference>
<dbReference type="Bgee" id="ENSG00000136404">
    <property type="expression patterns" value="Expressed in monocyte and 156 other cell types or tissues"/>
</dbReference>
<dbReference type="ExpressionAtlas" id="Q9BZW5">
    <property type="expression patterns" value="baseline and differential"/>
</dbReference>
<dbReference type="GO" id="GO:0005765">
    <property type="term" value="C:lysosomal membrane"/>
    <property type="evidence" value="ECO:0000250"/>
    <property type="project" value="UniProtKB"/>
</dbReference>
<dbReference type="CDD" id="cd21106">
    <property type="entry name" value="TM6SF1-like"/>
    <property type="match status" value="1"/>
</dbReference>
<dbReference type="InterPro" id="IPR033118">
    <property type="entry name" value="EXPERA"/>
</dbReference>
<dbReference type="InterPro" id="IPR047195">
    <property type="entry name" value="TM6SF1-like"/>
</dbReference>
<dbReference type="PANTHER" id="PTHR14568:SF10">
    <property type="entry name" value="TRANSMEMBRANE 6 SUPERFAMILY MEMBER 1"/>
    <property type="match status" value="1"/>
</dbReference>
<dbReference type="PANTHER" id="PTHR14568">
    <property type="entry name" value="TRANSMEMBRANE SUPERFAMILY 6 MEMBER 1/2"/>
    <property type="match status" value="1"/>
</dbReference>
<dbReference type="Pfam" id="PF05241">
    <property type="entry name" value="EBP"/>
    <property type="match status" value="1"/>
</dbReference>
<dbReference type="PROSITE" id="PS51751">
    <property type="entry name" value="EXPERA"/>
    <property type="match status" value="2"/>
</dbReference>
<organism>
    <name type="scientific">Homo sapiens</name>
    <name type="common">Human</name>
    <dbReference type="NCBI Taxonomy" id="9606"/>
    <lineage>
        <taxon>Eukaryota</taxon>
        <taxon>Metazoa</taxon>
        <taxon>Chordata</taxon>
        <taxon>Craniata</taxon>
        <taxon>Vertebrata</taxon>
        <taxon>Euteleostomi</taxon>
        <taxon>Mammalia</taxon>
        <taxon>Eutheria</taxon>
        <taxon>Euarchontoglires</taxon>
        <taxon>Primates</taxon>
        <taxon>Haplorrhini</taxon>
        <taxon>Catarrhini</taxon>
        <taxon>Hominidae</taxon>
        <taxon>Homo</taxon>
    </lineage>
</organism>
<gene>
    <name type="primary">TM6SF1</name>
</gene>
<comment type="function">
    <text evidence="4">May function as sterol isomerase.</text>
</comment>
<comment type="interaction">
    <interactant intactId="EBI-25852210">
        <id>Q9BZW5-2</id>
    </interactant>
    <interactant intactId="EBI-21603100">
        <id>P26378-2</id>
        <label>ELAVL4</label>
    </interactant>
    <organismsDiffer>false</organismsDiffer>
    <experiments>3</experiments>
</comment>
<comment type="interaction">
    <interactant intactId="EBI-25852210">
        <id>Q9BZW5-2</id>
    </interactant>
    <interactant intactId="EBI-348399">
        <id>P22607</id>
        <label>FGFR3</label>
    </interactant>
    <organismsDiffer>false</organismsDiffer>
    <experiments>3</experiments>
</comment>
<comment type="interaction">
    <interactant intactId="EBI-25852210">
        <id>Q9BZW5-2</id>
    </interactant>
    <interactant intactId="EBI-351506">
        <id>P06396</id>
        <label>GSN</label>
    </interactant>
    <organismsDiffer>false</organismsDiffer>
    <experiments>3</experiments>
</comment>
<comment type="interaction">
    <interactant intactId="EBI-25852210">
        <id>Q9BZW5-2</id>
    </interactant>
    <interactant intactId="EBI-466029">
        <id>P42858</id>
        <label>HTT</label>
    </interactant>
    <organismsDiffer>false</organismsDiffer>
    <experiments>3</experiments>
</comment>
<comment type="subcellular location">
    <subcellularLocation>
        <location evidence="1">Lysosome membrane</location>
        <topology evidence="6">Multi-pass membrane protein</topology>
    </subcellularLocation>
</comment>
<comment type="alternative products">
    <event type="alternative splicing"/>
    <isoform>
        <id>Q9BZW5-1</id>
        <name>1</name>
        <sequence type="displayed"/>
    </isoform>
    <isoform>
        <id>Q9BZW5-2</id>
        <name>2</name>
        <sequence type="described" ref="VSP_045697"/>
    </isoform>
</comment>
<comment type="tissue specificity">
    <text>Enhanced expression in spleen, testis and peripheral blood leukocytes.</text>
</comment>
<comment type="similarity">
    <text evidence="6">Belongs to the TM6SF family.</text>
</comment>
<name>TM6S1_HUMAN</name>
<feature type="chain" id="PRO_0000181833" description="Transmembrane 6 superfamily member 1">
    <location>
        <begin position="1"/>
        <end position="370"/>
    </location>
</feature>
<feature type="transmembrane region" description="Helical; Name=1" evidence="2">
    <location>
        <begin position="3"/>
        <end position="23"/>
    </location>
</feature>
<feature type="transmembrane region" description="Helical; Name=2" evidence="2">
    <location>
        <begin position="34"/>
        <end position="54"/>
    </location>
</feature>
<feature type="transmembrane region" description="Helical; Name=3" evidence="2">
    <location>
        <begin position="62"/>
        <end position="82"/>
    </location>
</feature>
<feature type="transmembrane region" description="Helical; Name=4" evidence="2">
    <location>
        <begin position="110"/>
        <end position="130"/>
    </location>
</feature>
<feature type="transmembrane region" description="Helical; Name=5" evidence="2">
    <location>
        <begin position="139"/>
        <end position="159"/>
    </location>
</feature>
<feature type="transmembrane region" description="Helical; Name=6" evidence="2">
    <location>
        <begin position="166"/>
        <end position="186"/>
    </location>
</feature>
<feature type="transmembrane region" description="Helical; Name=7" evidence="2">
    <location>
        <begin position="218"/>
        <end position="238"/>
    </location>
</feature>
<feature type="transmembrane region" description="Helical; Name=8" evidence="2">
    <location>
        <begin position="268"/>
        <end position="288"/>
    </location>
</feature>
<feature type="transmembrane region" description="Helical; Name=9" evidence="2">
    <location>
        <begin position="331"/>
        <end position="351"/>
    </location>
</feature>
<feature type="domain" description="EXPERA 1" evidence="3">
    <location>
        <begin position="60"/>
        <end position="185"/>
    </location>
</feature>
<feature type="domain" description="EXPERA 2" evidence="3">
    <location>
        <begin position="216"/>
        <end position="350"/>
    </location>
</feature>
<feature type="splice variant" id="VSP_045697" description="In isoform 2." evidence="5">
    <location>
        <begin position="237"/>
        <end position="267"/>
    </location>
</feature>
<feature type="sequence variant" id="VAR_012844" description="In dbSNP:rs1062232.">
    <original>I</original>
    <variation>T</variation>
    <location>
        <position position="17"/>
    </location>
</feature>
<feature type="sequence variant" id="VAR_024661" description="In dbSNP:rs1989.">
    <original>P</original>
    <variation>S</variation>
    <location>
        <position position="59"/>
    </location>
</feature>
<feature type="sequence conflict" description="In Ref. 2; AAY44754." evidence="6" ref="2">
    <original>V</original>
    <variation>M</variation>
    <location>
        <position position="11"/>
    </location>
</feature>
<feature type="sequence conflict" description="In Ref. 2; AAY44754." evidence="6" ref="2">
    <original>K</original>
    <variation>R</variation>
    <location>
        <position position="201"/>
    </location>
</feature>
<feature type="sequence conflict" description="In Ref. 1; AAG59699." evidence="6" ref="1">
    <original>A</original>
    <variation>V</variation>
    <location>
        <position position="341"/>
    </location>
</feature>